<proteinExistence type="evidence at protein level"/>
<gene>
    <name type="primary">Dnlz</name>
    <name type="synonym">D2Bwg1335e</name>
</gene>
<accession>Q9D113</accession>
<accession>B2RTG5</accession>
<protein>
    <recommendedName>
        <fullName>DNL-type zinc finger protein</fullName>
    </recommendedName>
    <alternativeName>
        <fullName>Hsp70-escort protein 1</fullName>
        <shortName>HEP1</shortName>
    </alternativeName>
    <alternativeName>
        <fullName>mtHsp70-escort protein</fullName>
    </alternativeName>
</protein>
<reference key="1">
    <citation type="journal article" date="2005" name="Science">
        <title>The transcriptional landscape of the mammalian genome.</title>
        <authorList>
            <person name="Carninci P."/>
            <person name="Kasukawa T."/>
            <person name="Katayama S."/>
            <person name="Gough J."/>
            <person name="Frith M.C."/>
            <person name="Maeda N."/>
            <person name="Oyama R."/>
            <person name="Ravasi T."/>
            <person name="Lenhard B."/>
            <person name="Wells C."/>
            <person name="Kodzius R."/>
            <person name="Shimokawa K."/>
            <person name="Bajic V.B."/>
            <person name="Brenner S.E."/>
            <person name="Batalov S."/>
            <person name="Forrest A.R."/>
            <person name="Zavolan M."/>
            <person name="Davis M.J."/>
            <person name="Wilming L.G."/>
            <person name="Aidinis V."/>
            <person name="Allen J.E."/>
            <person name="Ambesi-Impiombato A."/>
            <person name="Apweiler R."/>
            <person name="Aturaliya R.N."/>
            <person name="Bailey T.L."/>
            <person name="Bansal M."/>
            <person name="Baxter L."/>
            <person name="Beisel K.W."/>
            <person name="Bersano T."/>
            <person name="Bono H."/>
            <person name="Chalk A.M."/>
            <person name="Chiu K.P."/>
            <person name="Choudhary V."/>
            <person name="Christoffels A."/>
            <person name="Clutterbuck D.R."/>
            <person name="Crowe M.L."/>
            <person name="Dalla E."/>
            <person name="Dalrymple B.P."/>
            <person name="de Bono B."/>
            <person name="Della Gatta G."/>
            <person name="di Bernardo D."/>
            <person name="Down T."/>
            <person name="Engstrom P."/>
            <person name="Fagiolini M."/>
            <person name="Faulkner G."/>
            <person name="Fletcher C.F."/>
            <person name="Fukushima T."/>
            <person name="Furuno M."/>
            <person name="Futaki S."/>
            <person name="Gariboldi M."/>
            <person name="Georgii-Hemming P."/>
            <person name="Gingeras T.R."/>
            <person name="Gojobori T."/>
            <person name="Green R.E."/>
            <person name="Gustincich S."/>
            <person name="Harbers M."/>
            <person name="Hayashi Y."/>
            <person name="Hensch T.K."/>
            <person name="Hirokawa N."/>
            <person name="Hill D."/>
            <person name="Huminiecki L."/>
            <person name="Iacono M."/>
            <person name="Ikeo K."/>
            <person name="Iwama A."/>
            <person name="Ishikawa T."/>
            <person name="Jakt M."/>
            <person name="Kanapin A."/>
            <person name="Katoh M."/>
            <person name="Kawasawa Y."/>
            <person name="Kelso J."/>
            <person name="Kitamura H."/>
            <person name="Kitano H."/>
            <person name="Kollias G."/>
            <person name="Krishnan S.P."/>
            <person name="Kruger A."/>
            <person name="Kummerfeld S.K."/>
            <person name="Kurochkin I.V."/>
            <person name="Lareau L.F."/>
            <person name="Lazarevic D."/>
            <person name="Lipovich L."/>
            <person name="Liu J."/>
            <person name="Liuni S."/>
            <person name="McWilliam S."/>
            <person name="Madan Babu M."/>
            <person name="Madera M."/>
            <person name="Marchionni L."/>
            <person name="Matsuda H."/>
            <person name="Matsuzawa S."/>
            <person name="Miki H."/>
            <person name="Mignone F."/>
            <person name="Miyake S."/>
            <person name="Morris K."/>
            <person name="Mottagui-Tabar S."/>
            <person name="Mulder N."/>
            <person name="Nakano N."/>
            <person name="Nakauchi H."/>
            <person name="Ng P."/>
            <person name="Nilsson R."/>
            <person name="Nishiguchi S."/>
            <person name="Nishikawa S."/>
            <person name="Nori F."/>
            <person name="Ohara O."/>
            <person name="Okazaki Y."/>
            <person name="Orlando V."/>
            <person name="Pang K.C."/>
            <person name="Pavan W.J."/>
            <person name="Pavesi G."/>
            <person name="Pesole G."/>
            <person name="Petrovsky N."/>
            <person name="Piazza S."/>
            <person name="Reed J."/>
            <person name="Reid J.F."/>
            <person name="Ring B.Z."/>
            <person name="Ringwald M."/>
            <person name="Rost B."/>
            <person name="Ruan Y."/>
            <person name="Salzberg S.L."/>
            <person name="Sandelin A."/>
            <person name="Schneider C."/>
            <person name="Schoenbach C."/>
            <person name="Sekiguchi K."/>
            <person name="Semple C.A."/>
            <person name="Seno S."/>
            <person name="Sessa L."/>
            <person name="Sheng Y."/>
            <person name="Shibata Y."/>
            <person name="Shimada H."/>
            <person name="Shimada K."/>
            <person name="Silva D."/>
            <person name="Sinclair B."/>
            <person name="Sperling S."/>
            <person name="Stupka E."/>
            <person name="Sugiura K."/>
            <person name="Sultana R."/>
            <person name="Takenaka Y."/>
            <person name="Taki K."/>
            <person name="Tammoja K."/>
            <person name="Tan S.L."/>
            <person name="Tang S."/>
            <person name="Taylor M.S."/>
            <person name="Tegner J."/>
            <person name="Teichmann S.A."/>
            <person name="Ueda H.R."/>
            <person name="van Nimwegen E."/>
            <person name="Verardo R."/>
            <person name="Wei C.L."/>
            <person name="Yagi K."/>
            <person name="Yamanishi H."/>
            <person name="Zabarovsky E."/>
            <person name="Zhu S."/>
            <person name="Zimmer A."/>
            <person name="Hide W."/>
            <person name="Bult C."/>
            <person name="Grimmond S.M."/>
            <person name="Teasdale R.D."/>
            <person name="Liu E.T."/>
            <person name="Brusic V."/>
            <person name="Quackenbush J."/>
            <person name="Wahlestedt C."/>
            <person name="Mattick J.S."/>
            <person name="Hume D.A."/>
            <person name="Kai C."/>
            <person name="Sasaki D."/>
            <person name="Tomaru Y."/>
            <person name="Fukuda S."/>
            <person name="Kanamori-Katayama M."/>
            <person name="Suzuki M."/>
            <person name="Aoki J."/>
            <person name="Arakawa T."/>
            <person name="Iida J."/>
            <person name="Imamura K."/>
            <person name="Itoh M."/>
            <person name="Kato T."/>
            <person name="Kawaji H."/>
            <person name="Kawagashira N."/>
            <person name="Kawashima T."/>
            <person name="Kojima M."/>
            <person name="Kondo S."/>
            <person name="Konno H."/>
            <person name="Nakano K."/>
            <person name="Ninomiya N."/>
            <person name="Nishio T."/>
            <person name="Okada M."/>
            <person name="Plessy C."/>
            <person name="Shibata K."/>
            <person name="Shiraki T."/>
            <person name="Suzuki S."/>
            <person name="Tagami M."/>
            <person name="Waki K."/>
            <person name="Watahiki A."/>
            <person name="Okamura-Oho Y."/>
            <person name="Suzuki H."/>
            <person name="Kawai J."/>
            <person name="Hayashizaki Y."/>
        </authorList>
    </citation>
    <scope>NUCLEOTIDE SEQUENCE [LARGE SCALE MRNA]</scope>
    <source>
        <strain>C57BL/6J</strain>
        <tissue>Eye</tissue>
    </source>
</reference>
<reference key="2">
    <citation type="journal article" date="2009" name="PLoS Biol.">
        <title>Lineage-specific biology revealed by a finished genome assembly of the mouse.</title>
        <authorList>
            <person name="Church D.M."/>
            <person name="Goodstadt L."/>
            <person name="Hillier L.W."/>
            <person name="Zody M.C."/>
            <person name="Goldstein S."/>
            <person name="She X."/>
            <person name="Bult C.J."/>
            <person name="Agarwala R."/>
            <person name="Cherry J.L."/>
            <person name="DiCuccio M."/>
            <person name="Hlavina W."/>
            <person name="Kapustin Y."/>
            <person name="Meric P."/>
            <person name="Maglott D."/>
            <person name="Birtle Z."/>
            <person name="Marques A.C."/>
            <person name="Graves T."/>
            <person name="Zhou S."/>
            <person name="Teague B."/>
            <person name="Potamousis K."/>
            <person name="Churas C."/>
            <person name="Place M."/>
            <person name="Herschleb J."/>
            <person name="Runnheim R."/>
            <person name="Forrest D."/>
            <person name="Amos-Landgraf J."/>
            <person name="Schwartz D.C."/>
            <person name="Cheng Z."/>
            <person name="Lindblad-Toh K."/>
            <person name="Eichler E.E."/>
            <person name="Ponting C.P."/>
        </authorList>
    </citation>
    <scope>NUCLEOTIDE SEQUENCE [LARGE SCALE GENOMIC DNA]</scope>
    <source>
        <strain>C57BL/6J</strain>
    </source>
</reference>
<reference key="3">
    <citation type="journal article" date="2004" name="Genome Res.">
        <title>The status, quality, and expansion of the NIH full-length cDNA project: the Mammalian Gene Collection (MGC).</title>
        <authorList>
            <consortium name="The MGC Project Team"/>
        </authorList>
    </citation>
    <scope>NUCLEOTIDE SEQUENCE [LARGE SCALE MRNA]</scope>
    <source>
        <tissue>Brain</tissue>
        <tissue>Testis</tissue>
    </source>
</reference>
<reference key="4">
    <citation type="journal article" date="2010" name="Cell">
        <title>A tissue-specific atlas of mouse protein phosphorylation and expression.</title>
        <authorList>
            <person name="Huttlin E.L."/>
            <person name="Jedrychowski M.P."/>
            <person name="Elias J.E."/>
            <person name="Goswami T."/>
            <person name="Rad R."/>
            <person name="Beausoleil S.A."/>
            <person name="Villen J."/>
            <person name="Haas W."/>
            <person name="Sowa M.E."/>
            <person name="Gygi S.P."/>
        </authorList>
    </citation>
    <scope>IDENTIFICATION BY MASS SPECTROMETRY [LARGE SCALE ANALYSIS]</scope>
    <source>
        <tissue>Brain</tissue>
        <tissue>Brown adipose tissue</tissue>
        <tissue>Heart</tissue>
        <tissue>Kidney</tissue>
        <tissue>Liver</tissue>
    </source>
</reference>
<dbReference type="EMBL" id="AK004089">
    <property type="protein sequence ID" value="BAB23162.1"/>
    <property type="molecule type" value="mRNA"/>
</dbReference>
<dbReference type="EMBL" id="AK142070">
    <property type="protein sequence ID" value="BAE24931.1"/>
    <property type="molecule type" value="mRNA"/>
</dbReference>
<dbReference type="EMBL" id="AL732541">
    <property type="status" value="NOT_ANNOTATED_CDS"/>
    <property type="molecule type" value="Genomic_DNA"/>
</dbReference>
<dbReference type="EMBL" id="BC139333">
    <property type="protein sequence ID" value="AAI39334.1"/>
    <property type="molecule type" value="mRNA"/>
</dbReference>
<dbReference type="EMBL" id="BC139334">
    <property type="protein sequence ID" value="AAI39335.1"/>
    <property type="molecule type" value="mRNA"/>
</dbReference>
<dbReference type="CCDS" id="CCDS38083.1"/>
<dbReference type="RefSeq" id="NP_001132975.1">
    <property type="nucleotide sequence ID" value="NM_001139503.1"/>
</dbReference>
<dbReference type="RefSeq" id="NP_001132976.1">
    <property type="nucleotide sequence ID" value="NM_001139504.1"/>
</dbReference>
<dbReference type="RefSeq" id="NP_081104.1">
    <property type="nucleotide sequence ID" value="NM_026828.3"/>
</dbReference>
<dbReference type="SMR" id="Q9D113"/>
<dbReference type="BioGRID" id="206849">
    <property type="interactions" value="2"/>
</dbReference>
<dbReference type="FunCoup" id="Q9D113">
    <property type="interactions" value="1009"/>
</dbReference>
<dbReference type="STRING" id="10090.ENSMUSP00000028295"/>
<dbReference type="PhosphoSitePlus" id="Q9D113"/>
<dbReference type="PaxDb" id="10090-ENSMUSP00000028295"/>
<dbReference type="PeptideAtlas" id="Q9D113"/>
<dbReference type="ProteomicsDB" id="277357"/>
<dbReference type="Pumba" id="Q9D113"/>
<dbReference type="Antibodypedia" id="77454">
    <property type="antibodies" value="5 antibodies from 5 providers"/>
</dbReference>
<dbReference type="Ensembl" id="ENSMUST00000028295.9">
    <property type="protein sequence ID" value="ENSMUSP00000028295.9"/>
    <property type="gene ID" value="ENSMUSG00000075467.5"/>
</dbReference>
<dbReference type="GeneID" id="52838"/>
<dbReference type="KEGG" id="mmu:52838"/>
<dbReference type="UCSC" id="uc008iur.2">
    <property type="organism name" value="mouse"/>
</dbReference>
<dbReference type="AGR" id="MGI:106559"/>
<dbReference type="CTD" id="728489"/>
<dbReference type="MGI" id="MGI:106559">
    <property type="gene designation" value="Dnlz"/>
</dbReference>
<dbReference type="VEuPathDB" id="HostDB:ENSMUSG00000075467"/>
<dbReference type="eggNOG" id="KOG3277">
    <property type="taxonomic scope" value="Eukaryota"/>
</dbReference>
<dbReference type="GeneTree" id="ENSGT00390000008220"/>
<dbReference type="HOGENOM" id="CLU_093902_5_0_1"/>
<dbReference type="InParanoid" id="Q9D113"/>
<dbReference type="OMA" id="HPGKTEP"/>
<dbReference type="OrthoDB" id="512667at2759"/>
<dbReference type="PhylomeDB" id="Q9D113"/>
<dbReference type="TreeFam" id="TF313165"/>
<dbReference type="BioGRID-ORCS" id="52838">
    <property type="hits" value="25 hits in 80 CRISPR screens"/>
</dbReference>
<dbReference type="ChiTaRS" id="Dnlz">
    <property type="organism name" value="mouse"/>
</dbReference>
<dbReference type="PRO" id="PR:Q9D113"/>
<dbReference type="Proteomes" id="UP000000589">
    <property type="component" value="Chromosome 2"/>
</dbReference>
<dbReference type="RNAct" id="Q9D113">
    <property type="molecule type" value="protein"/>
</dbReference>
<dbReference type="Bgee" id="ENSMUSG00000075467">
    <property type="expression patterns" value="Expressed in embryonic brain and 257 other cell types or tissues"/>
</dbReference>
<dbReference type="GO" id="GO:0005829">
    <property type="term" value="C:cytosol"/>
    <property type="evidence" value="ECO:0007669"/>
    <property type="project" value="Ensembl"/>
</dbReference>
<dbReference type="GO" id="GO:0005739">
    <property type="term" value="C:mitochondrion"/>
    <property type="evidence" value="ECO:0007005"/>
    <property type="project" value="MGI"/>
</dbReference>
<dbReference type="GO" id="GO:0005654">
    <property type="term" value="C:nucleoplasm"/>
    <property type="evidence" value="ECO:0007669"/>
    <property type="project" value="Ensembl"/>
</dbReference>
<dbReference type="GO" id="GO:0044183">
    <property type="term" value="F:protein folding chaperone"/>
    <property type="evidence" value="ECO:0007669"/>
    <property type="project" value="Ensembl"/>
</dbReference>
<dbReference type="GO" id="GO:0008270">
    <property type="term" value="F:zinc ion binding"/>
    <property type="evidence" value="ECO:0007669"/>
    <property type="project" value="UniProtKB-KW"/>
</dbReference>
<dbReference type="GO" id="GO:0051131">
    <property type="term" value="P:chaperone-mediated protein complex assembly"/>
    <property type="evidence" value="ECO:0007669"/>
    <property type="project" value="Ensembl"/>
</dbReference>
<dbReference type="InterPro" id="IPR024158">
    <property type="entry name" value="Mt_import_TIM15"/>
</dbReference>
<dbReference type="InterPro" id="IPR007853">
    <property type="entry name" value="Znf_DNL-typ"/>
</dbReference>
<dbReference type="PANTHER" id="PTHR20922">
    <property type="entry name" value="DNL-TYPE ZINC FINGER PROTEIN"/>
    <property type="match status" value="1"/>
</dbReference>
<dbReference type="PANTHER" id="PTHR20922:SF13">
    <property type="entry name" value="DNL-TYPE ZINC FINGER PROTEIN"/>
    <property type="match status" value="1"/>
</dbReference>
<dbReference type="Pfam" id="PF05180">
    <property type="entry name" value="zf-DNL"/>
    <property type="match status" value="1"/>
</dbReference>
<dbReference type="PROSITE" id="PS51501">
    <property type="entry name" value="ZF_DNL"/>
    <property type="match status" value="1"/>
</dbReference>
<sequence>MLRTALSRMPTLLRSVRTRDSGPRRLWDLGARLKTAERLRGWAWGWASGWRSSSSAPGSGRAAALGRVEADHYQLVYTCKVCGTRSSKRISKLAYHQGVVIVTCPGCQNHHIIADNLSWFSDLKGKRNIEEILAARGEEVRRVSGDGALELILEAAVPPDTPEGDEDPPNPGKMGQS</sequence>
<comment type="function">
    <text evidence="1">May function as a co-chaperone towards HSPA9/mortalin which, by itself, is prone to self-aggregation.</text>
</comment>
<comment type="subunit">
    <text evidence="1">Oligomerizes in a concentration-dependent fashion. Interacts with HSPA9 (By similarity).</text>
</comment>
<comment type="subcellular location">
    <subcellularLocation>
        <location evidence="1">Mitochondrion</location>
    </subcellularLocation>
</comment>
<name>DNLZ_MOUSE</name>
<keyword id="KW-0143">Chaperone</keyword>
<keyword id="KW-0479">Metal-binding</keyword>
<keyword id="KW-0496">Mitochondrion</keyword>
<keyword id="KW-1185">Reference proteome</keyword>
<keyword id="KW-0809">Transit peptide</keyword>
<keyword id="KW-0862">Zinc</keyword>
<keyword id="KW-0863">Zinc-finger</keyword>
<organism>
    <name type="scientific">Mus musculus</name>
    <name type="common">Mouse</name>
    <dbReference type="NCBI Taxonomy" id="10090"/>
    <lineage>
        <taxon>Eukaryota</taxon>
        <taxon>Metazoa</taxon>
        <taxon>Chordata</taxon>
        <taxon>Craniata</taxon>
        <taxon>Vertebrata</taxon>
        <taxon>Euteleostomi</taxon>
        <taxon>Mammalia</taxon>
        <taxon>Eutheria</taxon>
        <taxon>Euarchontoglires</taxon>
        <taxon>Glires</taxon>
        <taxon>Rodentia</taxon>
        <taxon>Myomorpha</taxon>
        <taxon>Muroidea</taxon>
        <taxon>Muridae</taxon>
        <taxon>Murinae</taxon>
        <taxon>Mus</taxon>
        <taxon>Mus</taxon>
    </lineage>
</organism>
<evidence type="ECO:0000250" key="1"/>
<evidence type="ECO:0000255" key="2"/>
<evidence type="ECO:0000255" key="3">
    <source>
        <dbReference type="PROSITE-ProRule" id="PRU00834"/>
    </source>
</evidence>
<evidence type="ECO:0000256" key="4">
    <source>
        <dbReference type="SAM" id="MobiDB-lite"/>
    </source>
</evidence>
<feature type="transit peptide" description="Mitochondrion" evidence="2">
    <location>
        <begin position="1"/>
        <end position="53"/>
    </location>
</feature>
<feature type="chain" id="PRO_0000317167" description="DNL-type zinc finger protein">
    <location>
        <begin position="54"/>
        <end position="177"/>
    </location>
</feature>
<feature type="zinc finger region" description="DNL-type" evidence="3">
    <location>
        <begin position="68"/>
        <end position="165"/>
    </location>
</feature>
<feature type="region of interest" description="Disordered" evidence="4">
    <location>
        <begin position="155"/>
        <end position="177"/>
    </location>
</feature>
<feature type="binding site" evidence="3">
    <location>
        <position position="79"/>
    </location>
    <ligand>
        <name>Zn(2+)</name>
        <dbReference type="ChEBI" id="CHEBI:29105"/>
    </ligand>
</feature>
<feature type="binding site" evidence="3">
    <location>
        <position position="82"/>
    </location>
    <ligand>
        <name>Zn(2+)</name>
        <dbReference type="ChEBI" id="CHEBI:29105"/>
    </ligand>
</feature>
<feature type="binding site" evidence="3">
    <location>
        <position position="104"/>
    </location>
    <ligand>
        <name>Zn(2+)</name>
        <dbReference type="ChEBI" id="CHEBI:29105"/>
    </ligand>
</feature>
<feature type="binding site" evidence="3">
    <location>
        <position position="107"/>
    </location>
    <ligand>
        <name>Zn(2+)</name>
        <dbReference type="ChEBI" id="CHEBI:29105"/>
    </ligand>
</feature>